<organism>
    <name type="scientific">Yersinia pestis bv. Antiqua (strain Antiqua)</name>
    <dbReference type="NCBI Taxonomy" id="360102"/>
    <lineage>
        <taxon>Bacteria</taxon>
        <taxon>Pseudomonadati</taxon>
        <taxon>Pseudomonadota</taxon>
        <taxon>Gammaproteobacteria</taxon>
        <taxon>Enterobacterales</taxon>
        <taxon>Yersiniaceae</taxon>
        <taxon>Yersinia</taxon>
    </lineage>
</organism>
<sequence>MDMENLTWLHGKPTASGILKANPEDFVVVEDLGFEPDGEGEHLLVRIRKNGCNTQFVADYLARFAKLHPRLVSYAGLKDRHAVTEQWFCLHLPGKEAPDLATFELEGCEVLEAVRHKRKLRIGSLKGNAFTLVLRHITDRQDVEQRLQQIAAQGVPNYFGSQRFGRGGNNLVQARLWANNEIRVKERSKRSFYLSASRSAMFNLISSYRLAQQLSTTVLEGDALQLSGRGSWFVAQADELAALQQRVTAGELNITAPLPGDSELGTHGEALAFEQACLAEQTELLSLIKRERVEGSRRAVLLKPQNMISNWWDDVTLELSFWLPAGSFATSVVREIMNQDRADDTDIIE</sequence>
<dbReference type="EC" id="5.4.99.27" evidence="1"/>
<dbReference type="EMBL" id="CP000308">
    <property type="protein sequence ID" value="ABG14746.1"/>
    <property type="molecule type" value="Genomic_DNA"/>
</dbReference>
<dbReference type="RefSeq" id="WP_002209393.1">
    <property type="nucleotide sequence ID" value="NZ_CP009906.1"/>
</dbReference>
<dbReference type="SMR" id="Q1C476"/>
<dbReference type="GeneID" id="57975350"/>
<dbReference type="KEGG" id="ypa:YPA_2784"/>
<dbReference type="Proteomes" id="UP000001971">
    <property type="component" value="Chromosome"/>
</dbReference>
<dbReference type="GO" id="GO:0005829">
    <property type="term" value="C:cytosol"/>
    <property type="evidence" value="ECO:0007669"/>
    <property type="project" value="TreeGrafter"/>
</dbReference>
<dbReference type="GO" id="GO:0003723">
    <property type="term" value="F:RNA binding"/>
    <property type="evidence" value="ECO:0007669"/>
    <property type="project" value="InterPro"/>
</dbReference>
<dbReference type="GO" id="GO:0160150">
    <property type="term" value="F:tRNA pseudouridine(13) synthase activity"/>
    <property type="evidence" value="ECO:0007669"/>
    <property type="project" value="UniProtKB-EC"/>
</dbReference>
<dbReference type="GO" id="GO:0031119">
    <property type="term" value="P:tRNA pseudouridine synthesis"/>
    <property type="evidence" value="ECO:0007669"/>
    <property type="project" value="UniProtKB-UniRule"/>
</dbReference>
<dbReference type="CDD" id="cd02575">
    <property type="entry name" value="PseudoU_synth_EcTruD"/>
    <property type="match status" value="1"/>
</dbReference>
<dbReference type="FunFam" id="3.30.2340.10:FF:000001">
    <property type="entry name" value="tRNA pseudouridine synthase D"/>
    <property type="match status" value="1"/>
</dbReference>
<dbReference type="FunFam" id="3.30.2350.20:FF:000001">
    <property type="entry name" value="tRNA pseudouridine synthase D"/>
    <property type="match status" value="1"/>
</dbReference>
<dbReference type="Gene3D" id="3.30.2350.20">
    <property type="entry name" value="TruD, catalytic domain"/>
    <property type="match status" value="1"/>
</dbReference>
<dbReference type="Gene3D" id="3.30.2340.10">
    <property type="entry name" value="TruD, insertion domain"/>
    <property type="match status" value="1"/>
</dbReference>
<dbReference type="HAMAP" id="MF_01082">
    <property type="entry name" value="TruD"/>
    <property type="match status" value="1"/>
</dbReference>
<dbReference type="InterPro" id="IPR020103">
    <property type="entry name" value="PsdUridine_synth_cat_dom_sf"/>
</dbReference>
<dbReference type="InterPro" id="IPR001656">
    <property type="entry name" value="PsdUridine_synth_TruD"/>
</dbReference>
<dbReference type="InterPro" id="IPR020119">
    <property type="entry name" value="PsdUridine_synth_TruD_CS"/>
</dbReference>
<dbReference type="InterPro" id="IPR011760">
    <property type="entry name" value="PsdUridine_synth_TruD_insert"/>
</dbReference>
<dbReference type="InterPro" id="IPR042214">
    <property type="entry name" value="TruD_catalytic"/>
</dbReference>
<dbReference type="InterPro" id="IPR043165">
    <property type="entry name" value="TruD_insert_sf"/>
</dbReference>
<dbReference type="InterPro" id="IPR050170">
    <property type="entry name" value="TruD_pseudoU_synthase"/>
</dbReference>
<dbReference type="NCBIfam" id="NF002155">
    <property type="entry name" value="PRK00984.1-4"/>
    <property type="match status" value="1"/>
</dbReference>
<dbReference type="NCBIfam" id="TIGR00094">
    <property type="entry name" value="tRNA_TruD_broad"/>
    <property type="match status" value="1"/>
</dbReference>
<dbReference type="PANTHER" id="PTHR47811">
    <property type="entry name" value="TRNA PSEUDOURIDINE SYNTHASE D"/>
    <property type="match status" value="1"/>
</dbReference>
<dbReference type="PANTHER" id="PTHR47811:SF1">
    <property type="entry name" value="TRNA PSEUDOURIDINE SYNTHASE D"/>
    <property type="match status" value="1"/>
</dbReference>
<dbReference type="Pfam" id="PF01142">
    <property type="entry name" value="TruD"/>
    <property type="match status" value="2"/>
</dbReference>
<dbReference type="SUPFAM" id="SSF55120">
    <property type="entry name" value="Pseudouridine synthase"/>
    <property type="match status" value="1"/>
</dbReference>
<dbReference type="PROSITE" id="PS50984">
    <property type="entry name" value="TRUD"/>
    <property type="match status" value="1"/>
</dbReference>
<dbReference type="PROSITE" id="PS01268">
    <property type="entry name" value="UPF0024"/>
    <property type="match status" value="1"/>
</dbReference>
<name>TRUD_YERPA</name>
<accession>Q1C476</accession>
<evidence type="ECO:0000255" key="1">
    <source>
        <dbReference type="HAMAP-Rule" id="MF_01082"/>
    </source>
</evidence>
<proteinExistence type="inferred from homology"/>
<feature type="chain" id="PRO_1000084771" description="tRNA pseudouridine synthase D">
    <location>
        <begin position="1"/>
        <end position="349"/>
    </location>
</feature>
<feature type="domain" description="TRUD" evidence="1">
    <location>
        <begin position="154"/>
        <end position="302"/>
    </location>
</feature>
<feature type="active site" description="Nucleophile" evidence="1">
    <location>
        <position position="79"/>
    </location>
</feature>
<feature type="binding site" evidence="1">
    <location>
        <position position="26"/>
    </location>
    <ligand>
        <name>substrate</name>
    </ligand>
</feature>
<feature type="binding site" evidence="1">
    <location>
        <position position="128"/>
    </location>
    <ligand>
        <name>substrate</name>
    </ligand>
</feature>
<feature type="binding site" evidence="1">
    <location>
        <position position="328"/>
    </location>
    <ligand>
        <name>substrate</name>
    </ligand>
</feature>
<reference key="1">
    <citation type="journal article" date="2006" name="J. Bacteriol.">
        <title>Complete genome sequence of Yersinia pestis strains Antiqua and Nepal516: evidence of gene reduction in an emerging pathogen.</title>
        <authorList>
            <person name="Chain P.S.G."/>
            <person name="Hu P."/>
            <person name="Malfatti S.A."/>
            <person name="Radnedge L."/>
            <person name="Larimer F."/>
            <person name="Vergez L.M."/>
            <person name="Worsham P."/>
            <person name="Chu M.C."/>
            <person name="Andersen G.L."/>
        </authorList>
    </citation>
    <scope>NUCLEOTIDE SEQUENCE [LARGE SCALE GENOMIC DNA]</scope>
    <source>
        <strain>Antiqua</strain>
    </source>
</reference>
<protein>
    <recommendedName>
        <fullName evidence="1">tRNA pseudouridine synthase D</fullName>
        <ecNumber evidence="1">5.4.99.27</ecNumber>
    </recommendedName>
    <alternativeName>
        <fullName evidence="1">tRNA pseudouridine(13) synthase</fullName>
    </alternativeName>
    <alternativeName>
        <fullName evidence="1">tRNA pseudouridylate synthase D</fullName>
    </alternativeName>
    <alternativeName>
        <fullName evidence="1">tRNA-uridine isomerase D</fullName>
    </alternativeName>
</protein>
<gene>
    <name evidence="1" type="primary">truD</name>
    <name type="ordered locus">YPA_2784</name>
</gene>
<comment type="function">
    <text evidence="1">Responsible for synthesis of pseudouridine from uracil-13 in transfer RNAs.</text>
</comment>
<comment type="catalytic activity">
    <reaction evidence="1">
        <text>uridine(13) in tRNA = pseudouridine(13) in tRNA</text>
        <dbReference type="Rhea" id="RHEA:42540"/>
        <dbReference type="Rhea" id="RHEA-COMP:10105"/>
        <dbReference type="Rhea" id="RHEA-COMP:10106"/>
        <dbReference type="ChEBI" id="CHEBI:65314"/>
        <dbReference type="ChEBI" id="CHEBI:65315"/>
        <dbReference type="EC" id="5.4.99.27"/>
    </reaction>
</comment>
<comment type="similarity">
    <text evidence="1">Belongs to the pseudouridine synthase TruD family.</text>
</comment>
<keyword id="KW-0413">Isomerase</keyword>
<keyword id="KW-0819">tRNA processing</keyword>